<dbReference type="EMBL" id="CP000854">
    <property type="protein sequence ID" value="ACC40261.1"/>
    <property type="molecule type" value="Genomic_DNA"/>
</dbReference>
<dbReference type="RefSeq" id="WP_011740111.1">
    <property type="nucleotide sequence ID" value="NC_010612.1"/>
</dbReference>
<dbReference type="SMR" id="B2HJM5"/>
<dbReference type="STRING" id="216594.MMAR_1812"/>
<dbReference type="KEGG" id="mmi:MMAR_1812"/>
<dbReference type="eggNOG" id="COG0792">
    <property type="taxonomic scope" value="Bacteria"/>
</dbReference>
<dbReference type="HOGENOM" id="CLU_115353_2_3_11"/>
<dbReference type="OrthoDB" id="9794876at2"/>
<dbReference type="Proteomes" id="UP000001190">
    <property type="component" value="Chromosome"/>
</dbReference>
<dbReference type="GO" id="GO:0003676">
    <property type="term" value="F:nucleic acid binding"/>
    <property type="evidence" value="ECO:0007669"/>
    <property type="project" value="InterPro"/>
</dbReference>
<dbReference type="CDD" id="cd20736">
    <property type="entry name" value="PoNe_Nuclease"/>
    <property type="match status" value="1"/>
</dbReference>
<dbReference type="Gene3D" id="3.40.1350.10">
    <property type="match status" value="1"/>
</dbReference>
<dbReference type="HAMAP" id="MF_00048">
    <property type="entry name" value="UPF0102"/>
    <property type="match status" value="1"/>
</dbReference>
<dbReference type="InterPro" id="IPR011335">
    <property type="entry name" value="Restrct_endonuc-II-like"/>
</dbReference>
<dbReference type="InterPro" id="IPR011856">
    <property type="entry name" value="tRNA_endonuc-like_dom_sf"/>
</dbReference>
<dbReference type="InterPro" id="IPR003509">
    <property type="entry name" value="UPF0102_YraN-like"/>
</dbReference>
<dbReference type="NCBIfam" id="NF009150">
    <property type="entry name" value="PRK12497.1-3"/>
    <property type="match status" value="1"/>
</dbReference>
<dbReference type="NCBIfam" id="NF009153">
    <property type="entry name" value="PRK12497.3-1"/>
    <property type="match status" value="1"/>
</dbReference>
<dbReference type="NCBIfam" id="NF009154">
    <property type="entry name" value="PRK12497.3-3"/>
    <property type="match status" value="1"/>
</dbReference>
<dbReference type="NCBIfam" id="TIGR00252">
    <property type="entry name" value="YraN family protein"/>
    <property type="match status" value="1"/>
</dbReference>
<dbReference type="PANTHER" id="PTHR34039">
    <property type="entry name" value="UPF0102 PROTEIN YRAN"/>
    <property type="match status" value="1"/>
</dbReference>
<dbReference type="PANTHER" id="PTHR34039:SF1">
    <property type="entry name" value="UPF0102 PROTEIN YRAN"/>
    <property type="match status" value="1"/>
</dbReference>
<dbReference type="Pfam" id="PF02021">
    <property type="entry name" value="UPF0102"/>
    <property type="match status" value="1"/>
</dbReference>
<dbReference type="SUPFAM" id="SSF52980">
    <property type="entry name" value="Restriction endonuclease-like"/>
    <property type="match status" value="1"/>
</dbReference>
<name>Y1812_MYCMM</name>
<proteinExistence type="inferred from homology"/>
<feature type="chain" id="PRO_1000091249" description="UPF0102 protein MMAR_1812">
    <location>
        <begin position="1"/>
        <end position="122"/>
    </location>
</feature>
<sequence length="122" mass="13313">MKTLTRMQLGALGEQLAVEHLSGQGLQILTRNWRCRYGELDVIACEAATRTVVFVEVKTRTGDGYGGLAQAVTEGKVRRLRRLAGLWLAGQDRGWAAVRLDVIGVRIGRSANPEITHLMGVG</sequence>
<gene>
    <name type="ordered locus">MMAR_1812</name>
</gene>
<comment type="similarity">
    <text evidence="1">Belongs to the UPF0102 family.</text>
</comment>
<evidence type="ECO:0000255" key="1">
    <source>
        <dbReference type="HAMAP-Rule" id="MF_00048"/>
    </source>
</evidence>
<keyword id="KW-1185">Reference proteome</keyword>
<reference key="1">
    <citation type="journal article" date="2008" name="Genome Res.">
        <title>Insights from the complete genome sequence of Mycobacterium marinum on the evolution of Mycobacterium tuberculosis.</title>
        <authorList>
            <person name="Stinear T.P."/>
            <person name="Seemann T."/>
            <person name="Harrison P.F."/>
            <person name="Jenkin G.A."/>
            <person name="Davies J.K."/>
            <person name="Johnson P.D."/>
            <person name="Abdellah Z."/>
            <person name="Arrowsmith C."/>
            <person name="Chillingworth T."/>
            <person name="Churcher C."/>
            <person name="Clarke K."/>
            <person name="Cronin A."/>
            <person name="Davis P."/>
            <person name="Goodhead I."/>
            <person name="Holroyd N."/>
            <person name="Jagels K."/>
            <person name="Lord A."/>
            <person name="Moule S."/>
            <person name="Mungall K."/>
            <person name="Norbertczak H."/>
            <person name="Quail M.A."/>
            <person name="Rabbinowitsch E."/>
            <person name="Walker D."/>
            <person name="White B."/>
            <person name="Whitehead S."/>
            <person name="Small P.L."/>
            <person name="Brosch R."/>
            <person name="Ramakrishnan L."/>
            <person name="Fischbach M.A."/>
            <person name="Parkhill J."/>
            <person name="Cole S.T."/>
        </authorList>
    </citation>
    <scope>NUCLEOTIDE SEQUENCE [LARGE SCALE GENOMIC DNA]</scope>
    <source>
        <strain>ATCC BAA-535 / M</strain>
    </source>
</reference>
<protein>
    <recommendedName>
        <fullName evidence="1">UPF0102 protein MMAR_1812</fullName>
    </recommendedName>
</protein>
<accession>B2HJM5</accession>
<organism>
    <name type="scientific">Mycobacterium marinum (strain ATCC BAA-535 / M)</name>
    <dbReference type="NCBI Taxonomy" id="216594"/>
    <lineage>
        <taxon>Bacteria</taxon>
        <taxon>Bacillati</taxon>
        <taxon>Actinomycetota</taxon>
        <taxon>Actinomycetes</taxon>
        <taxon>Mycobacteriales</taxon>
        <taxon>Mycobacteriaceae</taxon>
        <taxon>Mycobacterium</taxon>
        <taxon>Mycobacterium ulcerans group</taxon>
    </lineage>
</organism>